<proteinExistence type="predicted"/>
<dbReference type="EMBL" id="BA000033">
    <property type="protein sequence ID" value="BAB96048.1"/>
    <property type="molecule type" value="Genomic_DNA"/>
</dbReference>
<dbReference type="RefSeq" id="WP_000951060.1">
    <property type="nucleotide sequence ID" value="NC_003923.1"/>
</dbReference>
<dbReference type="SMR" id="Q8NVA6"/>
<dbReference type="KEGG" id="sam:MW2183"/>
<dbReference type="HOGENOM" id="CLU_083287_18_2_9"/>
<dbReference type="GO" id="GO:0003677">
    <property type="term" value="F:DNA binding"/>
    <property type="evidence" value="ECO:0007669"/>
    <property type="project" value="UniProtKB-KW"/>
</dbReference>
<dbReference type="GO" id="GO:0003700">
    <property type="term" value="F:DNA-binding transcription factor activity"/>
    <property type="evidence" value="ECO:0007669"/>
    <property type="project" value="InterPro"/>
</dbReference>
<dbReference type="GO" id="GO:0006950">
    <property type="term" value="P:response to stress"/>
    <property type="evidence" value="ECO:0007669"/>
    <property type="project" value="TreeGrafter"/>
</dbReference>
<dbReference type="Gene3D" id="1.10.10.10">
    <property type="entry name" value="Winged helix-like DNA-binding domain superfamily/Winged helix DNA-binding domain"/>
    <property type="match status" value="1"/>
</dbReference>
<dbReference type="InterPro" id="IPR000835">
    <property type="entry name" value="HTH_MarR-typ"/>
</dbReference>
<dbReference type="InterPro" id="IPR039422">
    <property type="entry name" value="MarR/SlyA-like"/>
</dbReference>
<dbReference type="InterPro" id="IPR023187">
    <property type="entry name" value="Tscrpt_reg_MarR-type_CS"/>
</dbReference>
<dbReference type="InterPro" id="IPR036388">
    <property type="entry name" value="WH-like_DNA-bd_sf"/>
</dbReference>
<dbReference type="InterPro" id="IPR036390">
    <property type="entry name" value="WH_DNA-bd_sf"/>
</dbReference>
<dbReference type="PANTHER" id="PTHR33164">
    <property type="entry name" value="TRANSCRIPTIONAL REGULATOR, MARR FAMILY"/>
    <property type="match status" value="1"/>
</dbReference>
<dbReference type="PANTHER" id="PTHR33164:SF44">
    <property type="entry name" value="TRANSCRIPTIONAL REGULATORY PROTEIN"/>
    <property type="match status" value="1"/>
</dbReference>
<dbReference type="Pfam" id="PF01047">
    <property type="entry name" value="MarR"/>
    <property type="match status" value="1"/>
</dbReference>
<dbReference type="SMART" id="SM00347">
    <property type="entry name" value="HTH_MARR"/>
    <property type="match status" value="1"/>
</dbReference>
<dbReference type="SUPFAM" id="SSF46785">
    <property type="entry name" value="Winged helix' DNA-binding domain"/>
    <property type="match status" value="1"/>
</dbReference>
<dbReference type="PROSITE" id="PS01117">
    <property type="entry name" value="HTH_MARR_1"/>
    <property type="match status" value="1"/>
</dbReference>
<dbReference type="PROSITE" id="PS50995">
    <property type="entry name" value="HTH_MARR_2"/>
    <property type="match status" value="1"/>
</dbReference>
<evidence type="ECO:0000255" key="1">
    <source>
        <dbReference type="PROSITE-ProRule" id="PRU00345"/>
    </source>
</evidence>
<organism>
    <name type="scientific">Staphylococcus aureus (strain MW2)</name>
    <dbReference type="NCBI Taxonomy" id="196620"/>
    <lineage>
        <taxon>Bacteria</taxon>
        <taxon>Bacillati</taxon>
        <taxon>Bacillota</taxon>
        <taxon>Bacilli</taxon>
        <taxon>Bacillales</taxon>
        <taxon>Staphylococcaceae</taxon>
        <taxon>Staphylococcus</taxon>
    </lineage>
</organism>
<protein>
    <recommendedName>
        <fullName>Uncharacterized HTH-type transcriptional regulator MW2183</fullName>
    </recommendedName>
</protein>
<accession>Q8NVA6</accession>
<gene>
    <name type="ordered locus">MW2183</name>
</gene>
<feature type="chain" id="PRO_0000054417" description="Uncharacterized HTH-type transcriptional regulator MW2183">
    <location>
        <begin position="1"/>
        <end position="146"/>
    </location>
</feature>
<feature type="domain" description="HTH marR-type" evidence="1">
    <location>
        <begin position="1"/>
        <end position="137"/>
    </location>
</feature>
<reference key="1">
    <citation type="journal article" date="2002" name="Lancet">
        <title>Genome and virulence determinants of high virulence community-acquired MRSA.</title>
        <authorList>
            <person name="Baba T."/>
            <person name="Takeuchi F."/>
            <person name="Kuroda M."/>
            <person name="Yuzawa H."/>
            <person name="Aoki K."/>
            <person name="Oguchi A."/>
            <person name="Nagai Y."/>
            <person name="Iwama N."/>
            <person name="Asano K."/>
            <person name="Naimi T."/>
            <person name="Kuroda H."/>
            <person name="Cui L."/>
            <person name="Yamamoto K."/>
            <person name="Hiramatsu K."/>
        </authorList>
    </citation>
    <scope>NUCLEOTIDE SEQUENCE [LARGE SCALE GENOMIC DNA]</scope>
    <source>
        <strain>MW2</strain>
    </source>
</reference>
<sequence>MLSQEFFNSFITIYRPYLKLAEPILEKHNIYYGQWLILRDIAKHQPTTLIEISHRRAIEKPTARKTLKALIENDLITVENSLEDKRQKFLTLTPKGHELYEIVCLDVQKLQQAVVAKTNISQDQMQETINVMNQIHKILLKETHND</sequence>
<name>Y2183_STAAW</name>
<keyword id="KW-0238">DNA-binding</keyword>
<keyword id="KW-0804">Transcription</keyword>
<keyword id="KW-0805">Transcription regulation</keyword>